<name>PEPT_DESHY</name>
<comment type="function">
    <text evidence="1">Cleaves the N-terminal amino acid of tripeptides.</text>
</comment>
<comment type="catalytic activity">
    <reaction evidence="1">
        <text>Release of the N-terminal residue from a tripeptide.</text>
        <dbReference type="EC" id="3.4.11.4"/>
    </reaction>
</comment>
<comment type="cofactor">
    <cofactor evidence="1">
        <name>Zn(2+)</name>
        <dbReference type="ChEBI" id="CHEBI:29105"/>
    </cofactor>
    <text evidence="1">Binds 2 Zn(2+) ions per subunit.</text>
</comment>
<comment type="subcellular location">
    <subcellularLocation>
        <location evidence="1">Cytoplasm</location>
    </subcellularLocation>
</comment>
<comment type="similarity">
    <text evidence="1">Belongs to the peptidase M20B family.</text>
</comment>
<reference key="1">
    <citation type="journal article" date="2006" name="J. Bacteriol.">
        <title>Complete genome sequence of the dehalorespiring bacterium Desulfitobacterium hafniense Y51 and comparison with Dehalococcoides ethenogenes 195.</title>
        <authorList>
            <person name="Nonaka H."/>
            <person name="Keresztes G."/>
            <person name="Shinoda Y."/>
            <person name="Ikenaga Y."/>
            <person name="Abe M."/>
            <person name="Naito K."/>
            <person name="Inatomi K."/>
            <person name="Furukawa K."/>
            <person name="Inui M."/>
            <person name="Yukawa H."/>
        </authorList>
    </citation>
    <scope>NUCLEOTIDE SEQUENCE [LARGE SCALE GENOMIC DNA]</scope>
    <source>
        <strain>Y51</strain>
    </source>
</reference>
<protein>
    <recommendedName>
        <fullName evidence="1">Peptidase T</fullName>
        <ecNumber evidence="1">3.4.11.4</ecNumber>
    </recommendedName>
    <alternativeName>
        <fullName evidence="1">Aminotripeptidase</fullName>
        <shortName evidence="1">Tripeptidase</shortName>
    </alternativeName>
    <alternativeName>
        <fullName evidence="1">Tripeptide aminopeptidase</fullName>
    </alternativeName>
</protein>
<sequence length="410" mass="45390">MSSVIERFLRYVAIDTQSNEESQTTPSTGKQLNLARLLEQELKELGLQDARIQEGYVYGTLPANSTKAIPAIGFIAHMDTSPDFSGTNVKAQLVENYDGQDILLNPEHNLVLSPADFPELLDYIGKTLITTDGTTLLGADDKAGIAEIMTAIAYLTAHPEIEHGTICVAFTPDEEIGRGADQFDVAGFGADFAYTVDGGPIGELEYENFNAAKAIVKVKGRNVHPGNAKNKMINSILLANEYIVKLPPQETPATTEGYEGFYHLNDIRGDVEETTLYYIIRDFAEDSFAKRKETMLNLAEECNKKYGSGHFHVEITDQYKNMKEKIQPVMHIVDKAQKAMETVGVKPLIKPIRGGTDGSRLSFMGLPTPNLFTGGHNYHGRYEFIPTFAMEKSVEVILKIIELYAEEHSN</sequence>
<accession>Q24VU3</accession>
<proteinExistence type="inferred from homology"/>
<feature type="chain" id="PRO_0000274013" description="Peptidase T">
    <location>
        <begin position="1"/>
        <end position="410"/>
    </location>
</feature>
<feature type="active site" evidence="1">
    <location>
        <position position="79"/>
    </location>
</feature>
<feature type="active site" description="Proton acceptor" evidence="1">
    <location>
        <position position="174"/>
    </location>
</feature>
<feature type="binding site" evidence="1">
    <location>
        <position position="77"/>
    </location>
    <ligand>
        <name>Zn(2+)</name>
        <dbReference type="ChEBI" id="CHEBI:29105"/>
        <label>1</label>
    </ligand>
</feature>
<feature type="binding site" evidence="1">
    <location>
        <position position="140"/>
    </location>
    <ligand>
        <name>Zn(2+)</name>
        <dbReference type="ChEBI" id="CHEBI:29105"/>
        <label>1</label>
    </ligand>
</feature>
<feature type="binding site" evidence="1">
    <location>
        <position position="140"/>
    </location>
    <ligand>
        <name>Zn(2+)</name>
        <dbReference type="ChEBI" id="CHEBI:29105"/>
        <label>2</label>
    </ligand>
</feature>
<feature type="binding site" evidence="1">
    <location>
        <position position="175"/>
    </location>
    <ligand>
        <name>Zn(2+)</name>
        <dbReference type="ChEBI" id="CHEBI:29105"/>
        <label>2</label>
    </ligand>
</feature>
<feature type="binding site" evidence="1">
    <location>
        <position position="197"/>
    </location>
    <ligand>
        <name>Zn(2+)</name>
        <dbReference type="ChEBI" id="CHEBI:29105"/>
        <label>1</label>
    </ligand>
</feature>
<feature type="binding site" evidence="1">
    <location>
        <position position="379"/>
    </location>
    <ligand>
        <name>Zn(2+)</name>
        <dbReference type="ChEBI" id="CHEBI:29105"/>
        <label>2</label>
    </ligand>
</feature>
<evidence type="ECO:0000255" key="1">
    <source>
        <dbReference type="HAMAP-Rule" id="MF_00550"/>
    </source>
</evidence>
<gene>
    <name evidence="1" type="primary">pepT</name>
    <name type="ordered locus">DSY2060</name>
</gene>
<keyword id="KW-0031">Aminopeptidase</keyword>
<keyword id="KW-0963">Cytoplasm</keyword>
<keyword id="KW-0378">Hydrolase</keyword>
<keyword id="KW-0479">Metal-binding</keyword>
<keyword id="KW-0482">Metalloprotease</keyword>
<keyword id="KW-0645">Protease</keyword>
<keyword id="KW-1185">Reference proteome</keyword>
<keyword id="KW-0862">Zinc</keyword>
<organism>
    <name type="scientific">Desulfitobacterium hafniense (strain Y51)</name>
    <dbReference type="NCBI Taxonomy" id="138119"/>
    <lineage>
        <taxon>Bacteria</taxon>
        <taxon>Bacillati</taxon>
        <taxon>Bacillota</taxon>
        <taxon>Clostridia</taxon>
        <taxon>Eubacteriales</taxon>
        <taxon>Desulfitobacteriaceae</taxon>
        <taxon>Desulfitobacterium</taxon>
    </lineage>
</organism>
<dbReference type="EC" id="3.4.11.4" evidence="1"/>
<dbReference type="EMBL" id="AP008230">
    <property type="protein sequence ID" value="BAE83849.1"/>
    <property type="molecule type" value="Genomic_DNA"/>
</dbReference>
<dbReference type="RefSeq" id="WP_011460034.1">
    <property type="nucleotide sequence ID" value="NC_007907.1"/>
</dbReference>
<dbReference type="SMR" id="Q24VU3"/>
<dbReference type="STRING" id="138119.DSY2060"/>
<dbReference type="MEROPS" id="M20.003"/>
<dbReference type="KEGG" id="dsy:DSY2060"/>
<dbReference type="eggNOG" id="COG2195">
    <property type="taxonomic scope" value="Bacteria"/>
</dbReference>
<dbReference type="HOGENOM" id="CLU_053676_0_0_9"/>
<dbReference type="Proteomes" id="UP000001946">
    <property type="component" value="Chromosome"/>
</dbReference>
<dbReference type="GO" id="GO:0005829">
    <property type="term" value="C:cytosol"/>
    <property type="evidence" value="ECO:0007669"/>
    <property type="project" value="TreeGrafter"/>
</dbReference>
<dbReference type="GO" id="GO:0008237">
    <property type="term" value="F:metallopeptidase activity"/>
    <property type="evidence" value="ECO:0007669"/>
    <property type="project" value="UniProtKB-KW"/>
</dbReference>
<dbReference type="GO" id="GO:0045148">
    <property type="term" value="F:tripeptide aminopeptidase activity"/>
    <property type="evidence" value="ECO:0007669"/>
    <property type="project" value="UniProtKB-UniRule"/>
</dbReference>
<dbReference type="GO" id="GO:0008270">
    <property type="term" value="F:zinc ion binding"/>
    <property type="evidence" value="ECO:0007669"/>
    <property type="project" value="UniProtKB-UniRule"/>
</dbReference>
<dbReference type="GO" id="GO:0043171">
    <property type="term" value="P:peptide catabolic process"/>
    <property type="evidence" value="ECO:0007669"/>
    <property type="project" value="UniProtKB-UniRule"/>
</dbReference>
<dbReference type="GO" id="GO:0006508">
    <property type="term" value="P:proteolysis"/>
    <property type="evidence" value="ECO:0007669"/>
    <property type="project" value="UniProtKB-UniRule"/>
</dbReference>
<dbReference type="CDD" id="cd03892">
    <property type="entry name" value="M20_peptT"/>
    <property type="match status" value="1"/>
</dbReference>
<dbReference type="Gene3D" id="3.30.70.360">
    <property type="match status" value="1"/>
</dbReference>
<dbReference type="Gene3D" id="3.40.630.10">
    <property type="entry name" value="Zn peptidases"/>
    <property type="match status" value="1"/>
</dbReference>
<dbReference type="HAMAP" id="MF_00550">
    <property type="entry name" value="Aminopeptidase_M20"/>
    <property type="match status" value="1"/>
</dbReference>
<dbReference type="InterPro" id="IPR001261">
    <property type="entry name" value="ArgE/DapE_CS"/>
</dbReference>
<dbReference type="InterPro" id="IPR036264">
    <property type="entry name" value="Bact_exopeptidase_dim_dom"/>
</dbReference>
<dbReference type="InterPro" id="IPR002933">
    <property type="entry name" value="Peptidase_M20"/>
</dbReference>
<dbReference type="InterPro" id="IPR011650">
    <property type="entry name" value="Peptidase_M20_dimer"/>
</dbReference>
<dbReference type="InterPro" id="IPR010161">
    <property type="entry name" value="Peptidase_M20B"/>
</dbReference>
<dbReference type="NCBIfam" id="TIGR01882">
    <property type="entry name" value="peptidase-T"/>
    <property type="match status" value="1"/>
</dbReference>
<dbReference type="NCBIfam" id="NF003976">
    <property type="entry name" value="PRK05469.1"/>
    <property type="match status" value="1"/>
</dbReference>
<dbReference type="NCBIfam" id="NF009920">
    <property type="entry name" value="PRK13381.1"/>
    <property type="match status" value="1"/>
</dbReference>
<dbReference type="PANTHER" id="PTHR42994">
    <property type="entry name" value="PEPTIDASE T"/>
    <property type="match status" value="1"/>
</dbReference>
<dbReference type="PANTHER" id="PTHR42994:SF1">
    <property type="entry name" value="PEPTIDASE T"/>
    <property type="match status" value="1"/>
</dbReference>
<dbReference type="Pfam" id="PF07687">
    <property type="entry name" value="M20_dimer"/>
    <property type="match status" value="1"/>
</dbReference>
<dbReference type="Pfam" id="PF01546">
    <property type="entry name" value="Peptidase_M20"/>
    <property type="match status" value="1"/>
</dbReference>
<dbReference type="PIRSF" id="PIRSF037215">
    <property type="entry name" value="Peptidase_M20B"/>
    <property type="match status" value="1"/>
</dbReference>
<dbReference type="SUPFAM" id="SSF55031">
    <property type="entry name" value="Bacterial exopeptidase dimerisation domain"/>
    <property type="match status" value="1"/>
</dbReference>
<dbReference type="SUPFAM" id="SSF53187">
    <property type="entry name" value="Zn-dependent exopeptidases"/>
    <property type="match status" value="1"/>
</dbReference>
<dbReference type="PROSITE" id="PS00758">
    <property type="entry name" value="ARGE_DAPE_CPG2_1"/>
    <property type="match status" value="1"/>
</dbReference>
<dbReference type="PROSITE" id="PS00759">
    <property type="entry name" value="ARGE_DAPE_CPG2_2"/>
    <property type="match status" value="1"/>
</dbReference>